<gene>
    <name evidence="1" type="primary">speE</name>
    <name type="ordered locus">NATL1_21581</name>
</gene>
<feature type="chain" id="PRO_1000012006" description="Polyamine aminopropyltransferase">
    <location>
        <begin position="1"/>
        <end position="288"/>
    </location>
</feature>
<feature type="domain" description="PABS" evidence="1">
    <location>
        <begin position="9"/>
        <end position="242"/>
    </location>
</feature>
<feature type="active site" description="Proton acceptor" evidence="1">
    <location>
        <position position="162"/>
    </location>
</feature>
<feature type="binding site" evidence="1">
    <location>
        <position position="36"/>
    </location>
    <ligand>
        <name>S-methyl-5'-thioadenosine</name>
        <dbReference type="ChEBI" id="CHEBI:17509"/>
    </ligand>
</feature>
<feature type="binding site" evidence="1">
    <location>
        <position position="67"/>
    </location>
    <ligand>
        <name>spermidine</name>
        <dbReference type="ChEBI" id="CHEBI:57834"/>
    </ligand>
</feature>
<feature type="binding site" evidence="1">
    <location>
        <position position="91"/>
    </location>
    <ligand>
        <name>spermidine</name>
        <dbReference type="ChEBI" id="CHEBI:57834"/>
    </ligand>
</feature>
<feature type="binding site" evidence="1">
    <location>
        <position position="111"/>
    </location>
    <ligand>
        <name>S-methyl-5'-thioadenosine</name>
        <dbReference type="ChEBI" id="CHEBI:17509"/>
    </ligand>
</feature>
<feature type="binding site" evidence="1">
    <location>
        <begin position="143"/>
        <end position="144"/>
    </location>
    <ligand>
        <name>S-methyl-5'-thioadenosine</name>
        <dbReference type="ChEBI" id="CHEBI:17509"/>
    </ligand>
</feature>
<feature type="binding site" evidence="1">
    <location>
        <position position="169"/>
    </location>
    <ligand>
        <name>S-methyl-5'-thioadenosine</name>
        <dbReference type="ChEBI" id="CHEBI:17509"/>
    </ligand>
</feature>
<keyword id="KW-0963">Cytoplasm</keyword>
<keyword id="KW-0620">Polyamine biosynthesis</keyword>
<keyword id="KW-0745">Spermidine biosynthesis</keyword>
<keyword id="KW-0808">Transferase</keyword>
<sequence length="288" mass="32935">MNYKLKTRSGWLDEYHQGVRYGLEGKLILEESSPFQKITIYESKRYGKALLLDDCWMTAEKSEKCYHECLIHPALCCSTRIDNILIIGGGDGGSARECLKYKEVKSIDLVEIDLRVIELSQKYLPTIGGNAWSDSRLNLQIKNGIDWVKHTKENSYDVIIIDGADPIGPSKELFSNSFLKDCKRILKPGGVLATQSESPESFQEIHINIVKILREIFDYADPMYGSVSIYPSGLWSWAFASMENPKYIYPKKSRVKEISENCQVWSERWQQGAFNTIPAFIERELAKI</sequence>
<name>SPEE_PROM1</name>
<organism>
    <name type="scientific">Prochlorococcus marinus (strain NATL1A)</name>
    <dbReference type="NCBI Taxonomy" id="167555"/>
    <lineage>
        <taxon>Bacteria</taxon>
        <taxon>Bacillati</taxon>
        <taxon>Cyanobacteriota</taxon>
        <taxon>Cyanophyceae</taxon>
        <taxon>Synechococcales</taxon>
        <taxon>Prochlorococcaceae</taxon>
        <taxon>Prochlorococcus</taxon>
    </lineage>
</organism>
<dbReference type="EC" id="2.5.1.16" evidence="1"/>
<dbReference type="EMBL" id="CP000553">
    <property type="protein sequence ID" value="ABM76714.1"/>
    <property type="molecule type" value="Genomic_DNA"/>
</dbReference>
<dbReference type="RefSeq" id="WP_011824650.1">
    <property type="nucleotide sequence ID" value="NC_008819.1"/>
</dbReference>
<dbReference type="SMR" id="A2C5F4"/>
<dbReference type="KEGG" id="pme:NATL1_21581"/>
<dbReference type="eggNOG" id="COG0421">
    <property type="taxonomic scope" value="Bacteria"/>
</dbReference>
<dbReference type="HOGENOM" id="CLU_048199_0_0_3"/>
<dbReference type="UniPathway" id="UPA00248">
    <property type="reaction ID" value="UER00314"/>
</dbReference>
<dbReference type="Proteomes" id="UP000002592">
    <property type="component" value="Chromosome"/>
</dbReference>
<dbReference type="GO" id="GO:0005737">
    <property type="term" value="C:cytoplasm"/>
    <property type="evidence" value="ECO:0007669"/>
    <property type="project" value="UniProtKB-SubCell"/>
</dbReference>
<dbReference type="GO" id="GO:0004766">
    <property type="term" value="F:spermidine synthase activity"/>
    <property type="evidence" value="ECO:0007669"/>
    <property type="project" value="UniProtKB-UniRule"/>
</dbReference>
<dbReference type="GO" id="GO:0008295">
    <property type="term" value="P:spermidine biosynthetic process"/>
    <property type="evidence" value="ECO:0007669"/>
    <property type="project" value="UniProtKB-UniRule"/>
</dbReference>
<dbReference type="CDD" id="cd02440">
    <property type="entry name" value="AdoMet_MTases"/>
    <property type="match status" value="1"/>
</dbReference>
<dbReference type="Gene3D" id="2.30.140.10">
    <property type="entry name" value="Spermidine synthase, tetramerisation domain"/>
    <property type="match status" value="1"/>
</dbReference>
<dbReference type="Gene3D" id="3.40.50.150">
    <property type="entry name" value="Vaccinia Virus protein VP39"/>
    <property type="match status" value="1"/>
</dbReference>
<dbReference type="HAMAP" id="MF_00198">
    <property type="entry name" value="Spermidine_synth"/>
    <property type="match status" value="1"/>
</dbReference>
<dbReference type="InterPro" id="IPR030374">
    <property type="entry name" value="PABS"/>
</dbReference>
<dbReference type="InterPro" id="IPR030373">
    <property type="entry name" value="PABS_CS"/>
</dbReference>
<dbReference type="InterPro" id="IPR029063">
    <property type="entry name" value="SAM-dependent_MTases_sf"/>
</dbReference>
<dbReference type="InterPro" id="IPR001045">
    <property type="entry name" value="Spermi_synthase"/>
</dbReference>
<dbReference type="InterPro" id="IPR035246">
    <property type="entry name" value="Spermidine_synt_N"/>
</dbReference>
<dbReference type="InterPro" id="IPR037163">
    <property type="entry name" value="Spermidine_synt_N_sf"/>
</dbReference>
<dbReference type="NCBIfam" id="NF002010">
    <property type="entry name" value="PRK00811.1"/>
    <property type="match status" value="1"/>
</dbReference>
<dbReference type="PANTHER" id="PTHR11558:SF11">
    <property type="entry name" value="SPERMIDINE SYNTHASE"/>
    <property type="match status" value="1"/>
</dbReference>
<dbReference type="PANTHER" id="PTHR11558">
    <property type="entry name" value="SPERMIDINE/SPERMINE SYNTHASE"/>
    <property type="match status" value="1"/>
</dbReference>
<dbReference type="Pfam" id="PF17284">
    <property type="entry name" value="Spermine_synt_N"/>
    <property type="match status" value="1"/>
</dbReference>
<dbReference type="Pfam" id="PF01564">
    <property type="entry name" value="Spermine_synth"/>
    <property type="match status" value="1"/>
</dbReference>
<dbReference type="SUPFAM" id="SSF53335">
    <property type="entry name" value="S-adenosyl-L-methionine-dependent methyltransferases"/>
    <property type="match status" value="1"/>
</dbReference>
<dbReference type="PROSITE" id="PS01330">
    <property type="entry name" value="PABS_1"/>
    <property type="match status" value="1"/>
</dbReference>
<dbReference type="PROSITE" id="PS51006">
    <property type="entry name" value="PABS_2"/>
    <property type="match status" value="1"/>
</dbReference>
<accession>A2C5F4</accession>
<proteinExistence type="inferred from homology"/>
<evidence type="ECO:0000255" key="1">
    <source>
        <dbReference type="HAMAP-Rule" id="MF_00198"/>
    </source>
</evidence>
<reference key="1">
    <citation type="journal article" date="2007" name="PLoS Genet.">
        <title>Patterns and implications of gene gain and loss in the evolution of Prochlorococcus.</title>
        <authorList>
            <person name="Kettler G.C."/>
            <person name="Martiny A.C."/>
            <person name="Huang K."/>
            <person name="Zucker J."/>
            <person name="Coleman M.L."/>
            <person name="Rodrigue S."/>
            <person name="Chen F."/>
            <person name="Lapidus A."/>
            <person name="Ferriera S."/>
            <person name="Johnson J."/>
            <person name="Steglich C."/>
            <person name="Church G.M."/>
            <person name="Richardson P."/>
            <person name="Chisholm S.W."/>
        </authorList>
    </citation>
    <scope>NUCLEOTIDE SEQUENCE [LARGE SCALE GENOMIC DNA]</scope>
    <source>
        <strain>NATL1A</strain>
    </source>
</reference>
<comment type="function">
    <text evidence="1">Catalyzes the irreversible transfer of a propylamine group from the amino donor S-adenosylmethioninamine (decarboxy-AdoMet) to putrescine (1,4-diaminobutane) to yield spermidine.</text>
</comment>
<comment type="catalytic activity">
    <reaction evidence="1">
        <text>S-adenosyl 3-(methylsulfanyl)propylamine + putrescine = S-methyl-5'-thioadenosine + spermidine + H(+)</text>
        <dbReference type="Rhea" id="RHEA:12721"/>
        <dbReference type="ChEBI" id="CHEBI:15378"/>
        <dbReference type="ChEBI" id="CHEBI:17509"/>
        <dbReference type="ChEBI" id="CHEBI:57443"/>
        <dbReference type="ChEBI" id="CHEBI:57834"/>
        <dbReference type="ChEBI" id="CHEBI:326268"/>
        <dbReference type="EC" id="2.5.1.16"/>
    </reaction>
</comment>
<comment type="pathway">
    <text evidence="1">Amine and polyamine biosynthesis; spermidine biosynthesis; spermidine from putrescine: step 1/1.</text>
</comment>
<comment type="subunit">
    <text evidence="1">Homodimer or homotetramer.</text>
</comment>
<comment type="subcellular location">
    <subcellularLocation>
        <location evidence="1">Cytoplasm</location>
    </subcellularLocation>
</comment>
<comment type="similarity">
    <text evidence="1">Belongs to the spermidine/spermine synthase family.</text>
</comment>
<protein>
    <recommendedName>
        <fullName evidence="1">Polyamine aminopropyltransferase</fullName>
    </recommendedName>
    <alternativeName>
        <fullName evidence="1">Putrescine aminopropyltransferase</fullName>
        <shortName evidence="1">PAPT</shortName>
    </alternativeName>
    <alternativeName>
        <fullName evidence="1">Spermidine synthase</fullName>
        <shortName evidence="1">SPDS</shortName>
        <shortName evidence="1">SPDSY</shortName>
        <ecNumber evidence="1">2.5.1.16</ecNumber>
    </alternativeName>
</protein>